<name>FMT_YERE8</name>
<evidence type="ECO:0000255" key="1">
    <source>
        <dbReference type="HAMAP-Rule" id="MF_00182"/>
    </source>
</evidence>
<keyword id="KW-0648">Protein biosynthesis</keyword>
<keyword id="KW-0808">Transferase</keyword>
<feature type="chain" id="PRO_1000020206" description="Methionyl-tRNA formyltransferase">
    <location>
        <begin position="1"/>
        <end position="315"/>
    </location>
</feature>
<feature type="binding site" evidence="1">
    <location>
        <begin position="113"/>
        <end position="116"/>
    </location>
    <ligand>
        <name>(6S)-5,6,7,8-tetrahydrofolate</name>
        <dbReference type="ChEBI" id="CHEBI:57453"/>
    </ligand>
</feature>
<reference key="1">
    <citation type="journal article" date="2006" name="PLoS Genet.">
        <title>The complete genome sequence and comparative genome analysis of the high pathogenicity Yersinia enterocolitica strain 8081.</title>
        <authorList>
            <person name="Thomson N.R."/>
            <person name="Howard S."/>
            <person name="Wren B.W."/>
            <person name="Holden M.T.G."/>
            <person name="Crossman L."/>
            <person name="Challis G.L."/>
            <person name="Churcher C."/>
            <person name="Mungall K."/>
            <person name="Brooks K."/>
            <person name="Chillingworth T."/>
            <person name="Feltwell T."/>
            <person name="Abdellah Z."/>
            <person name="Hauser H."/>
            <person name="Jagels K."/>
            <person name="Maddison M."/>
            <person name="Moule S."/>
            <person name="Sanders M."/>
            <person name="Whitehead S."/>
            <person name="Quail M.A."/>
            <person name="Dougan G."/>
            <person name="Parkhill J."/>
            <person name="Prentice M.B."/>
        </authorList>
    </citation>
    <scope>NUCLEOTIDE SEQUENCE [LARGE SCALE GENOMIC DNA]</scope>
    <source>
        <strain>NCTC 13174 / 8081</strain>
    </source>
</reference>
<dbReference type="EC" id="2.1.2.9" evidence="1"/>
<dbReference type="EMBL" id="AM286415">
    <property type="protein sequence ID" value="CAL13909.1"/>
    <property type="molecule type" value="Genomic_DNA"/>
</dbReference>
<dbReference type="RefSeq" id="WP_005174602.1">
    <property type="nucleotide sequence ID" value="NC_008800.1"/>
</dbReference>
<dbReference type="RefSeq" id="YP_001008035.1">
    <property type="nucleotide sequence ID" value="NC_008800.1"/>
</dbReference>
<dbReference type="SMR" id="A1JRZ2"/>
<dbReference type="KEGG" id="yen:YE3890"/>
<dbReference type="PATRIC" id="fig|393305.7.peg.4139"/>
<dbReference type="eggNOG" id="COG0223">
    <property type="taxonomic scope" value="Bacteria"/>
</dbReference>
<dbReference type="HOGENOM" id="CLU_033347_1_2_6"/>
<dbReference type="OrthoDB" id="9802815at2"/>
<dbReference type="Proteomes" id="UP000000642">
    <property type="component" value="Chromosome"/>
</dbReference>
<dbReference type="GO" id="GO:0005829">
    <property type="term" value="C:cytosol"/>
    <property type="evidence" value="ECO:0007669"/>
    <property type="project" value="TreeGrafter"/>
</dbReference>
<dbReference type="GO" id="GO:0004479">
    <property type="term" value="F:methionyl-tRNA formyltransferase activity"/>
    <property type="evidence" value="ECO:0007669"/>
    <property type="project" value="UniProtKB-UniRule"/>
</dbReference>
<dbReference type="CDD" id="cd08646">
    <property type="entry name" value="FMT_core_Met-tRNA-FMT_N"/>
    <property type="match status" value="1"/>
</dbReference>
<dbReference type="CDD" id="cd08704">
    <property type="entry name" value="Met_tRNA_FMT_C"/>
    <property type="match status" value="1"/>
</dbReference>
<dbReference type="FunFam" id="3.10.25.10:FF:000001">
    <property type="entry name" value="Methionyl-tRNA formyltransferase"/>
    <property type="match status" value="1"/>
</dbReference>
<dbReference type="FunFam" id="3.40.50.170:FF:000003">
    <property type="entry name" value="Methionyl-tRNA formyltransferase"/>
    <property type="match status" value="1"/>
</dbReference>
<dbReference type="Gene3D" id="3.10.25.10">
    <property type="entry name" value="Formyl transferase, C-terminal domain"/>
    <property type="match status" value="1"/>
</dbReference>
<dbReference type="Gene3D" id="3.40.50.170">
    <property type="entry name" value="Formyl transferase, N-terminal domain"/>
    <property type="match status" value="1"/>
</dbReference>
<dbReference type="HAMAP" id="MF_00182">
    <property type="entry name" value="Formyl_trans"/>
    <property type="match status" value="1"/>
</dbReference>
<dbReference type="InterPro" id="IPR005794">
    <property type="entry name" value="Fmt"/>
</dbReference>
<dbReference type="InterPro" id="IPR005793">
    <property type="entry name" value="Formyl_trans_C"/>
</dbReference>
<dbReference type="InterPro" id="IPR037022">
    <property type="entry name" value="Formyl_trans_C_sf"/>
</dbReference>
<dbReference type="InterPro" id="IPR002376">
    <property type="entry name" value="Formyl_transf_N"/>
</dbReference>
<dbReference type="InterPro" id="IPR036477">
    <property type="entry name" value="Formyl_transf_N_sf"/>
</dbReference>
<dbReference type="InterPro" id="IPR011034">
    <property type="entry name" value="Formyl_transferase-like_C_sf"/>
</dbReference>
<dbReference type="InterPro" id="IPR001555">
    <property type="entry name" value="GART_AS"/>
</dbReference>
<dbReference type="InterPro" id="IPR044135">
    <property type="entry name" value="Met-tRNA-FMT_C"/>
</dbReference>
<dbReference type="InterPro" id="IPR041711">
    <property type="entry name" value="Met-tRNA-FMT_N"/>
</dbReference>
<dbReference type="NCBIfam" id="TIGR00460">
    <property type="entry name" value="fmt"/>
    <property type="match status" value="1"/>
</dbReference>
<dbReference type="PANTHER" id="PTHR11138">
    <property type="entry name" value="METHIONYL-TRNA FORMYLTRANSFERASE"/>
    <property type="match status" value="1"/>
</dbReference>
<dbReference type="PANTHER" id="PTHR11138:SF5">
    <property type="entry name" value="METHIONYL-TRNA FORMYLTRANSFERASE, MITOCHONDRIAL"/>
    <property type="match status" value="1"/>
</dbReference>
<dbReference type="Pfam" id="PF02911">
    <property type="entry name" value="Formyl_trans_C"/>
    <property type="match status" value="1"/>
</dbReference>
<dbReference type="Pfam" id="PF00551">
    <property type="entry name" value="Formyl_trans_N"/>
    <property type="match status" value="1"/>
</dbReference>
<dbReference type="SUPFAM" id="SSF50486">
    <property type="entry name" value="FMT C-terminal domain-like"/>
    <property type="match status" value="1"/>
</dbReference>
<dbReference type="SUPFAM" id="SSF53328">
    <property type="entry name" value="Formyltransferase"/>
    <property type="match status" value="1"/>
</dbReference>
<dbReference type="PROSITE" id="PS00373">
    <property type="entry name" value="GART"/>
    <property type="match status" value="1"/>
</dbReference>
<accession>A1JRZ2</accession>
<sequence length="315" mass="34237">MSDSLRIIFAGTPDFAARHLGALLSSQHQIVGVFTQPDRPAGRGNKLTPSPVKVLAEQHDIPIFQPKSLRPEENQHLVADLNADIMVVVAYGLILPASVLAMPRLGCINVHGSLLPRWRGAAPIQRSLWAGDAKTGVTIMQMDVGLDTGDMLHKIECDIQPEDTSATLYDKLAQLGPQGLLVTLQQLAEGSAQPEVQDEAQVTYAEKLSKEEAKLDWSLSAVQLERCIRAFNPWPVSYFVVDEQPIKVWQAQVLATVDNAAPGTIIHADKHGIQVATADGVLNITQLQPAGKKAMSAADLLNSRREWFTLGNQLA</sequence>
<protein>
    <recommendedName>
        <fullName evidence="1">Methionyl-tRNA formyltransferase</fullName>
        <ecNumber evidence="1">2.1.2.9</ecNumber>
    </recommendedName>
</protein>
<organism>
    <name type="scientific">Yersinia enterocolitica serotype O:8 / biotype 1B (strain NCTC 13174 / 8081)</name>
    <dbReference type="NCBI Taxonomy" id="393305"/>
    <lineage>
        <taxon>Bacteria</taxon>
        <taxon>Pseudomonadati</taxon>
        <taxon>Pseudomonadota</taxon>
        <taxon>Gammaproteobacteria</taxon>
        <taxon>Enterobacterales</taxon>
        <taxon>Yersiniaceae</taxon>
        <taxon>Yersinia</taxon>
    </lineage>
</organism>
<gene>
    <name evidence="1" type="primary">fmt</name>
    <name type="ordered locus">YE3890</name>
</gene>
<proteinExistence type="inferred from homology"/>
<comment type="function">
    <text evidence="1">Attaches a formyl group to the free amino group of methionyl-tRNA(fMet). The formyl group appears to play a dual role in the initiator identity of N-formylmethionyl-tRNA by promoting its recognition by IF2 and preventing the misappropriation of this tRNA by the elongation apparatus.</text>
</comment>
<comment type="catalytic activity">
    <reaction evidence="1">
        <text>L-methionyl-tRNA(fMet) + (6R)-10-formyltetrahydrofolate = N-formyl-L-methionyl-tRNA(fMet) + (6S)-5,6,7,8-tetrahydrofolate + H(+)</text>
        <dbReference type="Rhea" id="RHEA:24380"/>
        <dbReference type="Rhea" id="RHEA-COMP:9952"/>
        <dbReference type="Rhea" id="RHEA-COMP:9953"/>
        <dbReference type="ChEBI" id="CHEBI:15378"/>
        <dbReference type="ChEBI" id="CHEBI:57453"/>
        <dbReference type="ChEBI" id="CHEBI:78530"/>
        <dbReference type="ChEBI" id="CHEBI:78844"/>
        <dbReference type="ChEBI" id="CHEBI:195366"/>
        <dbReference type="EC" id="2.1.2.9"/>
    </reaction>
</comment>
<comment type="similarity">
    <text evidence="1">Belongs to the Fmt family.</text>
</comment>